<name>SYM_FRAT1</name>
<protein>
    <recommendedName>
        <fullName evidence="1">Methionine--tRNA ligase</fullName>
        <ecNumber evidence="1">6.1.1.10</ecNumber>
    </recommendedName>
    <alternativeName>
        <fullName evidence="1">Methionyl-tRNA synthetase</fullName>
        <shortName evidence="1">MetRS</shortName>
    </alternativeName>
</protein>
<feature type="chain" id="PRO_0000331829" description="Methionine--tRNA ligase">
    <location>
        <begin position="1"/>
        <end position="674"/>
    </location>
</feature>
<feature type="domain" description="tRNA-binding" evidence="1">
    <location>
        <begin position="574"/>
        <end position="674"/>
    </location>
</feature>
<feature type="short sequence motif" description="'HIGH' region">
    <location>
        <begin position="11"/>
        <end position="21"/>
    </location>
</feature>
<feature type="short sequence motif" description="'KMSKS' region">
    <location>
        <begin position="330"/>
        <end position="334"/>
    </location>
</feature>
<feature type="binding site" evidence="1">
    <location>
        <position position="142"/>
    </location>
    <ligand>
        <name>Zn(2+)</name>
        <dbReference type="ChEBI" id="CHEBI:29105"/>
    </ligand>
</feature>
<feature type="binding site" evidence="1">
    <location>
        <position position="145"/>
    </location>
    <ligand>
        <name>Zn(2+)</name>
        <dbReference type="ChEBI" id="CHEBI:29105"/>
    </ligand>
</feature>
<feature type="binding site" evidence="1">
    <location>
        <position position="155"/>
    </location>
    <ligand>
        <name>Zn(2+)</name>
        <dbReference type="ChEBI" id="CHEBI:29105"/>
    </ligand>
</feature>
<feature type="binding site" evidence="1">
    <location>
        <position position="158"/>
    </location>
    <ligand>
        <name>Zn(2+)</name>
        <dbReference type="ChEBI" id="CHEBI:29105"/>
    </ligand>
</feature>
<feature type="binding site" evidence="1">
    <location>
        <position position="333"/>
    </location>
    <ligand>
        <name>ATP</name>
        <dbReference type="ChEBI" id="CHEBI:30616"/>
    </ligand>
</feature>
<proteinExistence type="inferred from homology"/>
<keyword id="KW-0030">Aminoacyl-tRNA synthetase</keyword>
<keyword id="KW-0067">ATP-binding</keyword>
<keyword id="KW-0963">Cytoplasm</keyword>
<keyword id="KW-0436">Ligase</keyword>
<keyword id="KW-0479">Metal-binding</keyword>
<keyword id="KW-0547">Nucleotide-binding</keyword>
<keyword id="KW-0648">Protein biosynthesis</keyword>
<keyword id="KW-0694">RNA-binding</keyword>
<keyword id="KW-0820">tRNA-binding</keyword>
<keyword id="KW-0862">Zinc</keyword>
<dbReference type="EC" id="6.1.1.10" evidence="1"/>
<dbReference type="EMBL" id="AM286280">
    <property type="protein sequence ID" value="CAL09306.1"/>
    <property type="molecule type" value="Genomic_DNA"/>
</dbReference>
<dbReference type="RefSeq" id="WP_003021984.1">
    <property type="nucleotide sequence ID" value="NC_008245.1"/>
</dbReference>
<dbReference type="SMR" id="Q14GV0"/>
<dbReference type="KEGG" id="ftf:FTF1290"/>
<dbReference type="HOGENOM" id="CLU_009710_7_0_6"/>
<dbReference type="GO" id="GO:0005829">
    <property type="term" value="C:cytosol"/>
    <property type="evidence" value="ECO:0007669"/>
    <property type="project" value="TreeGrafter"/>
</dbReference>
<dbReference type="GO" id="GO:0005524">
    <property type="term" value="F:ATP binding"/>
    <property type="evidence" value="ECO:0007669"/>
    <property type="project" value="UniProtKB-UniRule"/>
</dbReference>
<dbReference type="GO" id="GO:0046872">
    <property type="term" value="F:metal ion binding"/>
    <property type="evidence" value="ECO:0007669"/>
    <property type="project" value="UniProtKB-KW"/>
</dbReference>
<dbReference type="GO" id="GO:0004825">
    <property type="term" value="F:methionine-tRNA ligase activity"/>
    <property type="evidence" value="ECO:0007669"/>
    <property type="project" value="UniProtKB-UniRule"/>
</dbReference>
<dbReference type="GO" id="GO:0000049">
    <property type="term" value="F:tRNA binding"/>
    <property type="evidence" value="ECO:0007669"/>
    <property type="project" value="UniProtKB-KW"/>
</dbReference>
<dbReference type="GO" id="GO:0006431">
    <property type="term" value="P:methionyl-tRNA aminoacylation"/>
    <property type="evidence" value="ECO:0007669"/>
    <property type="project" value="UniProtKB-UniRule"/>
</dbReference>
<dbReference type="CDD" id="cd07957">
    <property type="entry name" value="Anticodon_Ia_Met"/>
    <property type="match status" value="1"/>
</dbReference>
<dbReference type="CDD" id="cd00814">
    <property type="entry name" value="MetRS_core"/>
    <property type="match status" value="1"/>
</dbReference>
<dbReference type="CDD" id="cd02800">
    <property type="entry name" value="tRNA_bind_EcMetRS_like"/>
    <property type="match status" value="1"/>
</dbReference>
<dbReference type="FunFam" id="1.10.730.10:FF:000005">
    <property type="entry name" value="Methionine--tRNA ligase"/>
    <property type="match status" value="1"/>
</dbReference>
<dbReference type="FunFam" id="2.20.28.20:FF:000001">
    <property type="entry name" value="Methionine--tRNA ligase"/>
    <property type="match status" value="1"/>
</dbReference>
<dbReference type="FunFam" id="2.40.50.140:FF:000042">
    <property type="entry name" value="Methionine--tRNA ligase"/>
    <property type="match status" value="1"/>
</dbReference>
<dbReference type="Gene3D" id="3.40.50.620">
    <property type="entry name" value="HUPs"/>
    <property type="match status" value="1"/>
</dbReference>
<dbReference type="Gene3D" id="1.10.730.10">
    <property type="entry name" value="Isoleucyl-tRNA Synthetase, Domain 1"/>
    <property type="match status" value="1"/>
</dbReference>
<dbReference type="Gene3D" id="2.20.28.20">
    <property type="entry name" value="Methionyl-tRNA synthetase, Zn-domain"/>
    <property type="match status" value="1"/>
</dbReference>
<dbReference type="Gene3D" id="2.40.50.140">
    <property type="entry name" value="Nucleic acid-binding proteins"/>
    <property type="match status" value="1"/>
</dbReference>
<dbReference type="HAMAP" id="MF_00098">
    <property type="entry name" value="Met_tRNA_synth_type1"/>
    <property type="match status" value="1"/>
</dbReference>
<dbReference type="InterPro" id="IPR001412">
    <property type="entry name" value="aa-tRNA-synth_I_CS"/>
</dbReference>
<dbReference type="InterPro" id="IPR041872">
    <property type="entry name" value="Anticodon_Met"/>
</dbReference>
<dbReference type="InterPro" id="IPR004495">
    <property type="entry name" value="Met-tRNA-synth_bsu_C"/>
</dbReference>
<dbReference type="InterPro" id="IPR023458">
    <property type="entry name" value="Met-tRNA_ligase_1"/>
</dbReference>
<dbReference type="InterPro" id="IPR014758">
    <property type="entry name" value="Met-tRNA_synth"/>
</dbReference>
<dbReference type="InterPro" id="IPR015413">
    <property type="entry name" value="Methionyl/Leucyl_tRNA_Synth"/>
</dbReference>
<dbReference type="InterPro" id="IPR033911">
    <property type="entry name" value="MetRS_core"/>
</dbReference>
<dbReference type="InterPro" id="IPR029038">
    <property type="entry name" value="MetRS_Zn"/>
</dbReference>
<dbReference type="InterPro" id="IPR012340">
    <property type="entry name" value="NA-bd_OB-fold"/>
</dbReference>
<dbReference type="InterPro" id="IPR014729">
    <property type="entry name" value="Rossmann-like_a/b/a_fold"/>
</dbReference>
<dbReference type="InterPro" id="IPR002547">
    <property type="entry name" value="tRNA-bd_dom"/>
</dbReference>
<dbReference type="InterPro" id="IPR009080">
    <property type="entry name" value="tRNAsynth_Ia_anticodon-bd"/>
</dbReference>
<dbReference type="NCBIfam" id="TIGR00398">
    <property type="entry name" value="metG"/>
    <property type="match status" value="1"/>
</dbReference>
<dbReference type="NCBIfam" id="TIGR00399">
    <property type="entry name" value="metG_C_term"/>
    <property type="match status" value="1"/>
</dbReference>
<dbReference type="NCBIfam" id="NF001100">
    <property type="entry name" value="PRK00133.1"/>
    <property type="match status" value="1"/>
</dbReference>
<dbReference type="PANTHER" id="PTHR45765">
    <property type="entry name" value="METHIONINE--TRNA LIGASE"/>
    <property type="match status" value="1"/>
</dbReference>
<dbReference type="PANTHER" id="PTHR45765:SF1">
    <property type="entry name" value="METHIONINE--TRNA LIGASE, CYTOPLASMIC"/>
    <property type="match status" value="1"/>
</dbReference>
<dbReference type="Pfam" id="PF19303">
    <property type="entry name" value="Anticodon_3"/>
    <property type="match status" value="1"/>
</dbReference>
<dbReference type="Pfam" id="PF09334">
    <property type="entry name" value="tRNA-synt_1g"/>
    <property type="match status" value="1"/>
</dbReference>
<dbReference type="Pfam" id="PF01588">
    <property type="entry name" value="tRNA_bind"/>
    <property type="match status" value="1"/>
</dbReference>
<dbReference type="PRINTS" id="PR01041">
    <property type="entry name" value="TRNASYNTHMET"/>
</dbReference>
<dbReference type="SUPFAM" id="SSF47323">
    <property type="entry name" value="Anticodon-binding domain of a subclass of class I aminoacyl-tRNA synthetases"/>
    <property type="match status" value="1"/>
</dbReference>
<dbReference type="SUPFAM" id="SSF57770">
    <property type="entry name" value="Methionyl-tRNA synthetase (MetRS), Zn-domain"/>
    <property type="match status" value="1"/>
</dbReference>
<dbReference type="SUPFAM" id="SSF50249">
    <property type="entry name" value="Nucleic acid-binding proteins"/>
    <property type="match status" value="1"/>
</dbReference>
<dbReference type="SUPFAM" id="SSF52374">
    <property type="entry name" value="Nucleotidylyl transferase"/>
    <property type="match status" value="1"/>
</dbReference>
<dbReference type="PROSITE" id="PS00178">
    <property type="entry name" value="AA_TRNA_LIGASE_I"/>
    <property type="match status" value="1"/>
</dbReference>
<dbReference type="PROSITE" id="PS50886">
    <property type="entry name" value="TRBD"/>
    <property type="match status" value="1"/>
</dbReference>
<organism>
    <name type="scientific">Francisella tularensis subsp. tularensis (strain FSC 198)</name>
    <dbReference type="NCBI Taxonomy" id="393115"/>
    <lineage>
        <taxon>Bacteria</taxon>
        <taxon>Pseudomonadati</taxon>
        <taxon>Pseudomonadota</taxon>
        <taxon>Gammaproteobacteria</taxon>
        <taxon>Thiotrichales</taxon>
        <taxon>Francisellaceae</taxon>
        <taxon>Francisella</taxon>
    </lineage>
</organism>
<accession>Q14GV0</accession>
<sequence length="674" mass="76601">MRKILVTNALPYANGDLHLGHMLGYIQSDIWVRFQKLQGNQCIFVCGSDTHGTPIMLKAKSLGITPEELVTKYSNRHLQDFTDFEINFDNYHSTHNSLNKEIVEDIYNKLNNKNLISKKAIAQAYDPEAKMFLPDRFVKGTCPKCKAEDQYGDSCEVCGATYDPTELINPRSVISGQSPIQKNSEHFFFDLPALEKNIKDWIESNTLLQPEVANKLAEWFEQGLQSWDISRDAPYFGFAIPGTNEQKFFYVWLDAPMGYIASFKDYCNKNNINFGDFWGDSSSESELYHFIGKDIIYFHTLFWPAILSSTGYKTPTSVFANGFLTVNGKKMSKSRGTFIQARTYLDNLEPSYLRYYFASRLTSRIDDIDLNLEEFVTKSNSDIVGKVVNIASRCAGFIYKKFDATLSGEIFDPELESEFSKNHDAITQAFEKREFAHAVRLIMALADKANQFIDYHKPWQLAKEEGQEQKVHQVCSQGINMFKVLIVYLKPIIPSIVAEAERFLNIQFISWADAPKFLINHKIDKFKPLATRIEKEKVDKILEDTKKMLENEQSPQSKKEEPKLDIAAECTFDDFMKVDLRIAKITEASHVEGADKLLKLILDLGGVTKQVFAGIKSAYKPEDLIGKHTIMVANLAPRKMKFGMSEGMVLAAGDGKGIYILEPHEGAQPGMRVK</sequence>
<gene>
    <name evidence="1" type="primary">metG</name>
    <name type="ordered locus">FTF1290</name>
</gene>
<comment type="function">
    <text evidence="1">Is required not only for elongation of protein synthesis but also for the initiation of all mRNA translation through initiator tRNA(fMet) aminoacylation.</text>
</comment>
<comment type="catalytic activity">
    <reaction evidence="1">
        <text>tRNA(Met) + L-methionine + ATP = L-methionyl-tRNA(Met) + AMP + diphosphate</text>
        <dbReference type="Rhea" id="RHEA:13481"/>
        <dbReference type="Rhea" id="RHEA-COMP:9667"/>
        <dbReference type="Rhea" id="RHEA-COMP:9698"/>
        <dbReference type="ChEBI" id="CHEBI:30616"/>
        <dbReference type="ChEBI" id="CHEBI:33019"/>
        <dbReference type="ChEBI" id="CHEBI:57844"/>
        <dbReference type="ChEBI" id="CHEBI:78442"/>
        <dbReference type="ChEBI" id="CHEBI:78530"/>
        <dbReference type="ChEBI" id="CHEBI:456215"/>
        <dbReference type="EC" id="6.1.1.10"/>
    </reaction>
</comment>
<comment type="cofactor">
    <cofactor evidence="1">
        <name>Zn(2+)</name>
        <dbReference type="ChEBI" id="CHEBI:29105"/>
    </cofactor>
    <text evidence="1">Binds 1 zinc ion per subunit.</text>
</comment>
<comment type="subunit">
    <text evidence="1">Homodimer.</text>
</comment>
<comment type="subcellular location">
    <subcellularLocation>
        <location evidence="1">Cytoplasm</location>
    </subcellularLocation>
</comment>
<comment type="similarity">
    <text evidence="1">Belongs to the class-I aminoacyl-tRNA synthetase family. MetG type 1 subfamily.</text>
</comment>
<reference key="1">
    <citation type="journal article" date="2007" name="PLoS ONE">
        <title>Genome sequencing shows that European isolates of Francisella tularensis subspecies tularensis are almost identical to US laboratory strain Schu S4.</title>
        <authorList>
            <person name="Chaudhuri R.R."/>
            <person name="Ren C.-P."/>
            <person name="Desmond L."/>
            <person name="Vincent G.A."/>
            <person name="Silman N.J."/>
            <person name="Brehm J.K."/>
            <person name="Elmore M.J."/>
            <person name="Hudson M.J."/>
            <person name="Forsman M."/>
            <person name="Isherwood K.E."/>
            <person name="Gurycova D."/>
            <person name="Minton N.P."/>
            <person name="Titball R.W."/>
            <person name="Pallen M.J."/>
            <person name="Vipond R."/>
        </authorList>
    </citation>
    <scope>NUCLEOTIDE SEQUENCE [LARGE SCALE GENOMIC DNA]</scope>
    <source>
        <strain>FSC 198</strain>
    </source>
</reference>
<evidence type="ECO:0000255" key="1">
    <source>
        <dbReference type="HAMAP-Rule" id="MF_00098"/>
    </source>
</evidence>